<feature type="chain" id="PRO_0000393352" description="Insertion element IS1 4 protein InsA">
    <location>
        <begin position="1"/>
        <end position="91"/>
    </location>
</feature>
<comment type="function">
    <text>Absolutely required for transposition of IS1.</text>
</comment>
<comment type="similarity">
    <text evidence="1">Belongs to the IS1 elements InsA family.</text>
</comment>
<sequence length="91" mass="9902">MASVSISCPSCSATDGVVRNGKSTAGHQRYLCSHCRKTWQLQFTYTASQPGTHQKIIDMAMNGVGCRATARIMGVGLNTIFRHLKNSGRSR</sequence>
<gene>
    <name type="primary">insA4</name>
    <name type="ordered locus">b4516</name>
    <name type="ordered locus">JW0971</name>
</gene>
<name>INSA4_ECOLI</name>
<evidence type="ECO:0000305" key="1"/>
<protein>
    <recommendedName>
        <fullName>Insertion element IS1 4 protein InsA</fullName>
    </recommendedName>
    <alternativeName>
        <fullName>IS1d</fullName>
    </alternativeName>
</protein>
<dbReference type="EMBL" id="X52536">
    <property type="protein sequence ID" value="CAA36772.1"/>
    <property type="molecule type" value="Genomic_DNA"/>
</dbReference>
<dbReference type="EMBL" id="U00096">
    <property type="protein sequence ID" value="ABD18646.1"/>
    <property type="molecule type" value="Genomic_DNA"/>
</dbReference>
<dbReference type="EMBL" id="AP009048">
    <property type="protein sequence ID" value="BAA35753.1"/>
    <property type="molecule type" value="Genomic_DNA"/>
</dbReference>
<dbReference type="PIR" id="B93826">
    <property type="entry name" value="IEECB9"/>
</dbReference>
<dbReference type="PIR" id="JN0134">
    <property type="entry name" value="JN0134"/>
</dbReference>
<dbReference type="RefSeq" id="YP_588445.1">
    <property type="nucleotide sequence ID" value="NC_000913.3"/>
</dbReference>
<dbReference type="DIP" id="DIP-16998N"/>
<dbReference type="FunCoup" id="P0CF10">
    <property type="interactions" value="14"/>
</dbReference>
<dbReference type="EnsemblBacteria" id="ABD18646">
    <property type="protein sequence ID" value="ABD18646"/>
    <property type="gene ID" value="b4516"/>
</dbReference>
<dbReference type="GeneID" id="1450250"/>
<dbReference type="KEGG" id="ecj:JW0971"/>
<dbReference type="KEGG" id="eco:b0265"/>
<dbReference type="KEGG" id="eco:b0275"/>
<dbReference type="KEGG" id="eco:b4516"/>
<dbReference type="KEGG" id="ecoc:C3026_01280"/>
<dbReference type="PATRIC" id="fig|511145.12.peg.1023"/>
<dbReference type="HOGENOM" id="CLU_076276_6_3_6"/>
<dbReference type="InParanoid" id="P0CF10"/>
<dbReference type="OMA" id="KACEPCT"/>
<dbReference type="PhylomeDB" id="P0CF10"/>
<dbReference type="BioCyc" id="EcoCyc:MONOMER0-4228"/>
<dbReference type="PRO" id="PR:P0CF10"/>
<dbReference type="Proteomes" id="UP000000625">
    <property type="component" value="Chromosome"/>
</dbReference>
<dbReference type="GO" id="GO:0006313">
    <property type="term" value="P:DNA transposition"/>
    <property type="evidence" value="ECO:0000318"/>
    <property type="project" value="GO_Central"/>
</dbReference>
<dbReference type="InterPro" id="IPR024431">
    <property type="entry name" value="InsA_HTH_dom"/>
</dbReference>
<dbReference type="InterPro" id="IPR003220">
    <property type="entry name" value="InsA_N_dom_Znf"/>
</dbReference>
<dbReference type="InterPro" id="IPR051252">
    <property type="entry name" value="IS1_transposase_InsA"/>
</dbReference>
<dbReference type="PANTHER" id="PTHR47923">
    <property type="entry name" value="INSERTION ELEMENT IS1 1 PROTEIN INSA-RELATED"/>
    <property type="match status" value="1"/>
</dbReference>
<dbReference type="PANTHER" id="PTHR47923:SF1">
    <property type="entry name" value="INSERTION ELEMENT IS1 1 PROTEIN INSA-RELATED"/>
    <property type="match status" value="1"/>
</dbReference>
<dbReference type="Pfam" id="PF12759">
    <property type="entry name" value="HTH_Tnp_IS1"/>
    <property type="match status" value="1"/>
</dbReference>
<dbReference type="Pfam" id="PF03811">
    <property type="entry name" value="Zn_ribbon_InsA"/>
    <property type="match status" value="1"/>
</dbReference>
<proteinExistence type="inferred from homology"/>
<keyword id="KW-0233">DNA recombination</keyword>
<keyword id="KW-1185">Reference proteome</keyword>
<keyword id="KW-0814">Transposable element</keyword>
<keyword id="KW-0815">Transposition</keyword>
<accession>P0CF10</accession>
<accession>P03827</accession>
<accession>P0ADH0</accession>
<accession>P0C651</accession>
<accession>Q2EER2</accession>
<accession>Q2MCF5</accession>
<accession>Q2MCH2</accession>
<accession>Q933I5</accession>
<reference key="1">
    <citation type="journal article" date="1991" name="Gene">
        <title>Four types of IS1 with differences in nucleotide sequence reside in the Escherichia coli K-12 chromosome.</title>
        <authorList>
            <person name="Umeda M."/>
            <person name="Ohtsubo E."/>
        </authorList>
    </citation>
    <scope>NUCLEOTIDE SEQUENCE [GENOMIC DNA]</scope>
    <source>
        <strain>K12 / W3110 / ATCC 27325 / DSM 5911</strain>
    </source>
</reference>
<reference key="2">
    <citation type="journal article" date="1996" name="DNA Res.">
        <title>A 718-kb DNA sequence of the Escherichia coli K-12 genome corresponding to the 12.7-28.0 min region on the linkage map.</title>
        <authorList>
            <person name="Oshima T."/>
            <person name="Aiba H."/>
            <person name="Baba T."/>
            <person name="Fujita K."/>
            <person name="Hayashi K."/>
            <person name="Honjo A."/>
            <person name="Ikemoto K."/>
            <person name="Inada T."/>
            <person name="Itoh T."/>
            <person name="Kajihara M."/>
            <person name="Kanai K."/>
            <person name="Kashimoto K."/>
            <person name="Kimura S."/>
            <person name="Kitagawa M."/>
            <person name="Makino K."/>
            <person name="Masuda S."/>
            <person name="Miki T."/>
            <person name="Mizobuchi K."/>
            <person name="Mori H."/>
            <person name="Motomura K."/>
            <person name="Nakamura Y."/>
            <person name="Nashimoto H."/>
            <person name="Nishio Y."/>
            <person name="Saito N."/>
            <person name="Sampei G."/>
            <person name="Seki Y."/>
            <person name="Tagami H."/>
            <person name="Takemoto K."/>
            <person name="Wada C."/>
            <person name="Yamamoto Y."/>
            <person name="Yano M."/>
            <person name="Horiuchi T."/>
        </authorList>
    </citation>
    <scope>NUCLEOTIDE SEQUENCE [LARGE SCALE GENOMIC DNA]</scope>
    <source>
        <strain>K12 / W3110 / ATCC 27325 / DSM 5911</strain>
    </source>
</reference>
<reference key="3">
    <citation type="submission" date="1997-01" db="EMBL/GenBank/DDBJ databases">
        <title>Sequence of minutes 4-25 of Escherichia coli.</title>
        <authorList>
            <person name="Chung E."/>
            <person name="Allen E."/>
            <person name="Araujo R."/>
            <person name="Aparicio A.M."/>
            <person name="Davis K."/>
            <person name="Duncan M."/>
            <person name="Federspiel N."/>
            <person name="Hyman R."/>
            <person name="Kalman S."/>
            <person name="Komp C."/>
            <person name="Kurdi O."/>
            <person name="Lew H."/>
            <person name="Lin D."/>
            <person name="Namath A."/>
            <person name="Oefner P."/>
            <person name="Roberts D."/>
            <person name="Schramm S."/>
            <person name="Davis R.W."/>
        </authorList>
    </citation>
    <scope>NUCLEOTIDE SEQUENCE [LARGE SCALE GENOMIC DNA]</scope>
    <source>
        <strain>K12 / MG1655 / ATCC 47076</strain>
    </source>
</reference>
<reference key="4">
    <citation type="journal article" date="1997" name="Science">
        <title>The complete genome sequence of Escherichia coli K-12.</title>
        <authorList>
            <person name="Blattner F.R."/>
            <person name="Plunkett G. III"/>
            <person name="Bloch C.A."/>
            <person name="Perna N.T."/>
            <person name="Burland V."/>
            <person name="Riley M."/>
            <person name="Collado-Vides J."/>
            <person name="Glasner J.D."/>
            <person name="Rode C.K."/>
            <person name="Mayhew G.F."/>
            <person name="Gregor J."/>
            <person name="Davis N.W."/>
            <person name="Kirkpatrick H.A."/>
            <person name="Goeden M.A."/>
            <person name="Rose D.J."/>
            <person name="Mau B."/>
            <person name="Shao Y."/>
        </authorList>
    </citation>
    <scope>NUCLEOTIDE SEQUENCE [LARGE SCALE GENOMIC DNA]</scope>
    <source>
        <strain>K12 / MG1655 / ATCC 47076</strain>
    </source>
</reference>
<reference key="5">
    <citation type="journal article" date="2006" name="Mol. Syst. Biol.">
        <title>Highly accurate genome sequences of Escherichia coli K-12 strains MG1655 and W3110.</title>
        <authorList>
            <person name="Hayashi K."/>
            <person name="Morooka N."/>
            <person name="Yamamoto Y."/>
            <person name="Fujita K."/>
            <person name="Isono K."/>
            <person name="Choi S."/>
            <person name="Ohtsubo E."/>
            <person name="Baba T."/>
            <person name="Wanner B.L."/>
            <person name="Mori H."/>
            <person name="Horiuchi T."/>
        </authorList>
    </citation>
    <scope>NUCLEOTIDE SEQUENCE [LARGE SCALE GENOMIC DNA]</scope>
    <source>
        <strain>K12 / W3110 / ATCC 27325 / DSM 5911</strain>
    </source>
</reference>
<organism>
    <name type="scientific">Escherichia coli (strain K12)</name>
    <dbReference type="NCBI Taxonomy" id="83333"/>
    <lineage>
        <taxon>Bacteria</taxon>
        <taxon>Pseudomonadati</taxon>
        <taxon>Pseudomonadota</taxon>
        <taxon>Gammaproteobacteria</taxon>
        <taxon>Enterobacterales</taxon>
        <taxon>Enterobacteriaceae</taxon>
        <taxon>Escherichia</taxon>
    </lineage>
</organism>